<reference key="1">
    <citation type="journal article" date="1995" name="J. Mol. Evol.">
        <title>Molecular phylogeny of Allomyces macrogynus: congruency between nuclear ribosomal RNA- and mitochondrial protein-based trees.</title>
        <authorList>
            <person name="Paquin B."/>
            <person name="Forget L."/>
            <person name="Roewer I."/>
            <person name="Lang B.F."/>
        </authorList>
    </citation>
    <scope>NUCLEOTIDE SEQUENCE [GENOMIC DNA]</scope>
    <source>
        <strain>ATCC 46923 / Burma 3-35 (35OC)</strain>
    </source>
</reference>
<reference key="2">
    <citation type="journal article" date="1996" name="J. Mol. Biol.">
        <title>The mitochondrial DNA of Allomyces macrogynus: the complete genomic sequence from an ancestral fungus.</title>
        <authorList>
            <person name="Paquin B."/>
            <person name="Lang B.F."/>
        </authorList>
    </citation>
    <scope>NUCLEOTIDE SEQUENCE [GENOMIC DNA]</scope>
    <source>
        <strain>ATCC 46923 / Burma 3-35 (35OC)</strain>
    </source>
</reference>
<dbReference type="EC" id="7.1.1.9"/>
<dbReference type="EMBL" id="U41288">
    <property type="protein sequence ID" value="AAC49234.1"/>
    <property type="molecule type" value="Genomic_DNA"/>
</dbReference>
<dbReference type="PIR" id="S63651">
    <property type="entry name" value="S63651"/>
</dbReference>
<dbReference type="RefSeq" id="NP_043733.1">
    <property type="nucleotide sequence ID" value="NC_001715.1"/>
</dbReference>
<dbReference type="SMR" id="P80440"/>
<dbReference type="GeneID" id="801856"/>
<dbReference type="VEuPathDB" id="FungiDB:AlmafMp14"/>
<dbReference type="UniPathway" id="UPA00705"/>
<dbReference type="GO" id="GO:0005743">
    <property type="term" value="C:mitochondrial inner membrane"/>
    <property type="evidence" value="ECO:0007669"/>
    <property type="project" value="UniProtKB-SubCell"/>
</dbReference>
<dbReference type="GO" id="GO:0045277">
    <property type="term" value="C:respiratory chain complex IV"/>
    <property type="evidence" value="ECO:0007669"/>
    <property type="project" value="InterPro"/>
</dbReference>
<dbReference type="GO" id="GO:0004129">
    <property type="term" value="F:cytochrome-c oxidase activity"/>
    <property type="evidence" value="ECO:0007669"/>
    <property type="project" value="UniProtKB-EC"/>
</dbReference>
<dbReference type="GO" id="GO:0020037">
    <property type="term" value="F:heme binding"/>
    <property type="evidence" value="ECO:0007669"/>
    <property type="project" value="InterPro"/>
</dbReference>
<dbReference type="GO" id="GO:0046872">
    <property type="term" value="F:metal ion binding"/>
    <property type="evidence" value="ECO:0007669"/>
    <property type="project" value="UniProtKB-KW"/>
</dbReference>
<dbReference type="GO" id="GO:0015990">
    <property type="term" value="P:electron transport coupled proton transport"/>
    <property type="evidence" value="ECO:0007669"/>
    <property type="project" value="InterPro"/>
</dbReference>
<dbReference type="GO" id="GO:0006123">
    <property type="term" value="P:mitochondrial electron transport, cytochrome c to oxygen"/>
    <property type="evidence" value="ECO:0007669"/>
    <property type="project" value="TreeGrafter"/>
</dbReference>
<dbReference type="CDD" id="cd01663">
    <property type="entry name" value="Cyt_c_Oxidase_I"/>
    <property type="match status" value="1"/>
</dbReference>
<dbReference type="FunFam" id="1.20.210.10:FF:000001">
    <property type="entry name" value="Cytochrome c oxidase subunit 1"/>
    <property type="match status" value="1"/>
</dbReference>
<dbReference type="Gene3D" id="1.20.210.10">
    <property type="entry name" value="Cytochrome c oxidase-like, subunit I domain"/>
    <property type="match status" value="1"/>
</dbReference>
<dbReference type="InterPro" id="IPR023616">
    <property type="entry name" value="Cyt_c_oxase-like_su1_dom"/>
</dbReference>
<dbReference type="InterPro" id="IPR036927">
    <property type="entry name" value="Cyt_c_oxase-like_su1_sf"/>
</dbReference>
<dbReference type="InterPro" id="IPR000883">
    <property type="entry name" value="Cyt_C_Oxase_1"/>
</dbReference>
<dbReference type="InterPro" id="IPR023615">
    <property type="entry name" value="Cyt_c_Oxase_su1_BS"/>
</dbReference>
<dbReference type="InterPro" id="IPR033944">
    <property type="entry name" value="Cyt_c_oxase_su1_dom"/>
</dbReference>
<dbReference type="InterPro" id="IPR014241">
    <property type="entry name" value="Cyt_c_oxidase_su1_bac"/>
</dbReference>
<dbReference type="NCBIfam" id="TIGR02891">
    <property type="entry name" value="CtaD_CoxA"/>
    <property type="match status" value="1"/>
</dbReference>
<dbReference type="PANTHER" id="PTHR10422">
    <property type="entry name" value="CYTOCHROME C OXIDASE SUBUNIT 1"/>
    <property type="match status" value="1"/>
</dbReference>
<dbReference type="PANTHER" id="PTHR10422:SF18">
    <property type="entry name" value="CYTOCHROME C OXIDASE SUBUNIT 1"/>
    <property type="match status" value="1"/>
</dbReference>
<dbReference type="Pfam" id="PF00115">
    <property type="entry name" value="COX1"/>
    <property type="match status" value="1"/>
</dbReference>
<dbReference type="PRINTS" id="PR01165">
    <property type="entry name" value="CYCOXIDASEI"/>
</dbReference>
<dbReference type="SUPFAM" id="SSF81442">
    <property type="entry name" value="Cytochrome c oxidase subunit I-like"/>
    <property type="match status" value="1"/>
</dbReference>
<dbReference type="PROSITE" id="PS50855">
    <property type="entry name" value="COX1"/>
    <property type="match status" value="1"/>
</dbReference>
<dbReference type="PROSITE" id="PS00077">
    <property type="entry name" value="COX1_CUB"/>
    <property type="match status" value="1"/>
</dbReference>
<sequence>MFQRNTVYRWLFSTNAKDIGTLYLVFSIFAGMIGTAFSVLIRFELAGPGVQYLYGDHQLYNVIITAHAFIMIFFLVMPAMLGGFGNYFVPIMIGAPDMAFPRLNNISFWLLPPSLILLVGSAFVEQGAGTGWTVYPPLSSIGFHSGGSVDLAIFSLHLAGISSMLGSINFITTILNMRAPGMTMHKLPLFVWSILITAILLLLSLPVLAGAITMLLTDRNLNTTFYDPAGGGDPVLYQHLFWFFGHPEVYIIIIPGFGIISQVISTFSRKPIFGYLGMVYAMASIGILGFIVWSHHMYTVGLDVDTRAYFTAATMIIAVPTGIKIFSWLATLYGGNILYRTPAYFALGFLFLFTIGGVTGVMLANASLDVALHDTYYVVAHFHYVLSMGAVFALFAGFYYWIGKITGKQYNEFWGQVHFWTMFIGVNVTFFPMHFLGLNGMPRRIPDYPDAFTQWNVISSFGSIISIVSTIVFLYGLYLTLSQPAVSLANNYWHVPSFFSSTHSLYGDTTQTSSSLEWVLPSPPAFHAFNHLPVQS</sequence>
<evidence type="ECO:0000250" key="1">
    <source>
        <dbReference type="UniProtKB" id="P00396"/>
    </source>
</evidence>
<evidence type="ECO:0000250" key="2">
    <source>
        <dbReference type="UniProtKB" id="P00401"/>
    </source>
</evidence>
<evidence type="ECO:0000255" key="3"/>
<evidence type="ECO:0000305" key="4"/>
<accession>P80440</accession>
<gene>
    <name type="primary">COX1</name>
</gene>
<name>COX1_ALLMA</name>
<keyword id="KW-0106">Calcium</keyword>
<keyword id="KW-0186">Copper</keyword>
<keyword id="KW-0249">Electron transport</keyword>
<keyword id="KW-0349">Heme</keyword>
<keyword id="KW-0408">Iron</keyword>
<keyword id="KW-0460">Magnesium</keyword>
<keyword id="KW-0472">Membrane</keyword>
<keyword id="KW-0479">Metal-binding</keyword>
<keyword id="KW-0496">Mitochondrion</keyword>
<keyword id="KW-0999">Mitochondrion inner membrane</keyword>
<keyword id="KW-0679">Respiratory chain</keyword>
<keyword id="KW-1278">Translocase</keyword>
<keyword id="KW-0812">Transmembrane</keyword>
<keyword id="KW-1133">Transmembrane helix</keyword>
<keyword id="KW-0813">Transport</keyword>
<comment type="function">
    <text evidence="2">Component of the cytochrome c oxidase, the last enzyme in the mitochondrial electron transport chain which drives oxidative phosphorylation. The respiratory chain contains 3 multisubunit complexes succinate dehydrogenase (complex II, CII), ubiquinol-cytochrome c oxidoreductase (cytochrome b-c1 complex, complex III, CIII) and cytochrome c oxidase (complex IV, CIV), that cooperate to transfer electrons derived from NADH and succinate to molecular oxygen, creating an electrochemical gradient over the inner membrane that drives transmembrane transport and the ATP synthase. Cytochrome c oxidase is the component of the respiratory chain that catalyzes the reduction of oxygen to water. Electrons originating from reduced cytochrome c in the intermembrane space (IMS) are transferred via the dinuclear copper A center (CU(A)) of subunit 2 and heme A of subunit 1 to the active site in subunit 1, a binuclear center (BNC) formed by heme A3 and copper B (CU(B)). The BNC reduces molecular oxygen to 2 water molecules using 4 electrons from cytochrome c in the IMS and 4 protons from the mitochondrial matrix.</text>
</comment>
<comment type="catalytic activity">
    <reaction evidence="2">
        <text>4 Fe(II)-[cytochrome c] + O2 + 8 H(+)(in) = 4 Fe(III)-[cytochrome c] + 2 H2O + 4 H(+)(out)</text>
        <dbReference type="Rhea" id="RHEA:11436"/>
        <dbReference type="Rhea" id="RHEA-COMP:10350"/>
        <dbReference type="Rhea" id="RHEA-COMP:14399"/>
        <dbReference type="ChEBI" id="CHEBI:15377"/>
        <dbReference type="ChEBI" id="CHEBI:15378"/>
        <dbReference type="ChEBI" id="CHEBI:15379"/>
        <dbReference type="ChEBI" id="CHEBI:29033"/>
        <dbReference type="ChEBI" id="CHEBI:29034"/>
        <dbReference type="EC" id="7.1.1.9"/>
    </reaction>
    <physiologicalReaction direction="left-to-right" evidence="2">
        <dbReference type="Rhea" id="RHEA:11437"/>
    </physiologicalReaction>
</comment>
<comment type="cofactor">
    <cofactor evidence="2">
        <name>heme</name>
        <dbReference type="ChEBI" id="CHEBI:30413"/>
    </cofactor>
    <text evidence="2">Binds 2 heme A groups non-covalently per subunit.</text>
</comment>
<comment type="cofactor">
    <cofactor evidence="2">
        <name>Cu cation</name>
        <dbReference type="ChEBI" id="CHEBI:23378"/>
    </cofactor>
    <text evidence="2">Binds a copper B center.</text>
</comment>
<comment type="pathway">
    <text evidence="2">Energy metabolism; oxidative phosphorylation.</text>
</comment>
<comment type="subunit">
    <text evidence="2">Component of the cytochrome c oxidase (complex IV, CIV), a multisubunit enzyme composed of a catalytic core of 3 subunits and several supernumerary subunits. The complex exists as a monomer or a dimer and forms supercomplexes (SCs) in the inner mitochondrial membrane with ubiquinol-cytochrome c oxidoreductase (cytochrome b-c1 complex, complex III, CIII).</text>
</comment>
<comment type="subcellular location">
    <subcellularLocation>
        <location evidence="2">Mitochondrion inner membrane</location>
        <topology evidence="2">Multi-pass membrane protein</topology>
    </subcellularLocation>
</comment>
<comment type="similarity">
    <text evidence="4">Belongs to the heme-copper respiratory oxidase family.</text>
</comment>
<geneLocation type="mitochondrion"/>
<protein>
    <recommendedName>
        <fullName>Cytochrome c oxidase subunit 1</fullName>
        <ecNumber>7.1.1.9</ecNumber>
    </recommendedName>
    <alternativeName>
        <fullName>Cytochrome c oxidase polypeptide I</fullName>
    </alternativeName>
</protein>
<proteinExistence type="inferred from homology"/>
<organism>
    <name type="scientific">Allomyces macrogynus</name>
    <dbReference type="NCBI Taxonomy" id="28583"/>
    <lineage>
        <taxon>Eukaryota</taxon>
        <taxon>Fungi</taxon>
        <taxon>Fungi incertae sedis</taxon>
        <taxon>Blastocladiomycota</taxon>
        <taxon>Blastocladiomycetes</taxon>
        <taxon>Blastocladiales</taxon>
        <taxon>Blastocladiaceae</taxon>
        <taxon>Allomyces</taxon>
    </lineage>
</organism>
<feature type="chain" id="PRO_0000183279" description="Cytochrome c oxidase subunit 1">
    <location>
        <begin position="1"/>
        <end position="536"/>
    </location>
</feature>
<feature type="transmembrane region" description="Helical" evidence="3">
    <location>
        <begin position="21"/>
        <end position="41"/>
    </location>
</feature>
<feature type="transmembrane region" description="Helical" evidence="3">
    <location>
        <begin position="62"/>
        <end position="82"/>
    </location>
</feature>
<feature type="transmembrane region" description="Helical" evidence="3">
    <location>
        <begin position="105"/>
        <end position="125"/>
    </location>
</feature>
<feature type="transmembrane region" description="Helical" evidence="3">
    <location>
        <begin position="151"/>
        <end position="171"/>
    </location>
</feature>
<feature type="transmembrane region" description="Helical" evidence="3">
    <location>
        <begin position="189"/>
        <end position="209"/>
    </location>
</feature>
<feature type="transmembrane region" description="Helical" evidence="3">
    <location>
        <begin position="240"/>
        <end position="260"/>
    </location>
</feature>
<feature type="transmembrane region" description="Helical" evidence="3">
    <location>
        <begin position="272"/>
        <end position="292"/>
    </location>
</feature>
<feature type="transmembrane region" description="Helical" evidence="3">
    <location>
        <begin position="310"/>
        <end position="330"/>
    </location>
</feature>
<feature type="transmembrane region" description="Helical" evidence="3">
    <location>
        <begin position="343"/>
        <end position="363"/>
    </location>
</feature>
<feature type="transmembrane region" description="Helical" evidence="3">
    <location>
        <begin position="382"/>
        <end position="402"/>
    </location>
</feature>
<feature type="transmembrane region" description="Helical" evidence="3">
    <location>
        <begin position="417"/>
        <end position="437"/>
    </location>
</feature>
<feature type="transmembrane region" description="Helical" evidence="3">
    <location>
        <begin position="461"/>
        <end position="481"/>
    </location>
</feature>
<feature type="binding site" evidence="2">
    <location>
        <position position="44"/>
    </location>
    <ligand>
        <name>Ca(2+)</name>
        <dbReference type="ChEBI" id="CHEBI:29108"/>
    </ligand>
</feature>
<feature type="binding site" evidence="2">
    <location>
        <position position="49"/>
    </location>
    <ligand>
        <name>Ca(2+)</name>
        <dbReference type="ChEBI" id="CHEBI:29108"/>
    </ligand>
</feature>
<feature type="binding site" description="axial binding residue" evidence="2">
    <location>
        <position position="67"/>
    </location>
    <ligand>
        <name>Fe(II)-heme a</name>
        <dbReference type="ChEBI" id="CHEBI:61715"/>
        <note>low-spin</note>
    </ligand>
    <ligandPart>
        <name>Fe</name>
        <dbReference type="ChEBI" id="CHEBI:18248"/>
    </ligandPart>
</feature>
<feature type="binding site" evidence="2">
    <location>
        <position position="246"/>
    </location>
    <ligand>
        <name>Cu cation</name>
        <dbReference type="ChEBI" id="CHEBI:23378"/>
        <label>B</label>
    </ligand>
</feature>
<feature type="binding site" evidence="1">
    <location>
        <position position="250"/>
    </location>
    <ligand>
        <name>O2</name>
        <dbReference type="ChEBI" id="CHEBI:15379"/>
    </ligand>
</feature>
<feature type="binding site" evidence="2">
    <location>
        <position position="295"/>
    </location>
    <ligand>
        <name>Cu cation</name>
        <dbReference type="ChEBI" id="CHEBI:23378"/>
        <label>B</label>
    </ligand>
</feature>
<feature type="binding site" evidence="2">
    <location>
        <position position="296"/>
    </location>
    <ligand>
        <name>Cu cation</name>
        <dbReference type="ChEBI" id="CHEBI:23378"/>
        <label>B</label>
    </ligand>
</feature>
<feature type="binding site" evidence="2">
    <location>
        <position position="373"/>
    </location>
    <ligand>
        <name>Mg(2+)</name>
        <dbReference type="ChEBI" id="CHEBI:18420"/>
        <note>ligand shared with subunit 2</note>
    </ligand>
</feature>
<feature type="binding site" evidence="2">
    <location>
        <position position="374"/>
    </location>
    <ligand>
        <name>Mg(2+)</name>
        <dbReference type="ChEBI" id="CHEBI:18420"/>
        <note>ligand shared with subunit 2</note>
    </ligand>
</feature>
<feature type="binding site" description="axial binding residue" evidence="2">
    <location>
        <position position="381"/>
    </location>
    <ligand>
        <name>heme a3</name>
        <dbReference type="ChEBI" id="CHEBI:83282"/>
        <note>high-spin</note>
    </ligand>
    <ligandPart>
        <name>Fe</name>
        <dbReference type="ChEBI" id="CHEBI:18248"/>
    </ligandPart>
</feature>
<feature type="binding site" description="axial binding residue" evidence="2">
    <location>
        <position position="383"/>
    </location>
    <ligand>
        <name>Fe(II)-heme a</name>
        <dbReference type="ChEBI" id="CHEBI:61715"/>
        <note>low-spin</note>
    </ligand>
    <ligandPart>
        <name>Fe</name>
        <dbReference type="ChEBI" id="CHEBI:18248"/>
    </ligandPart>
</feature>
<feature type="binding site" evidence="2">
    <location>
        <position position="446"/>
    </location>
    <ligand>
        <name>Ca(2+)</name>
        <dbReference type="ChEBI" id="CHEBI:29108"/>
    </ligand>
</feature>
<feature type="cross-link" description="1'-histidyl-3'-tyrosine (His-Tyr)" evidence="2">
    <location>
        <begin position="246"/>
        <end position="250"/>
    </location>
</feature>